<dbReference type="EMBL" id="U94848">
    <property type="protein sequence ID" value="AAB96423.1"/>
    <property type="molecule type" value="Genomic_DNA"/>
</dbReference>
<dbReference type="EMBL" id="AY603355">
    <property type="protein sequence ID" value="AAT10442.1"/>
    <property type="molecule type" value="Genomic_DNA"/>
</dbReference>
<dbReference type="PIR" id="T30790">
    <property type="entry name" value="T30790"/>
</dbReference>
<dbReference type="SMR" id="P68708"/>
<dbReference type="DNASU" id="3707510"/>
<dbReference type="KEGG" id="vg:3707510"/>
<dbReference type="Proteomes" id="UP000159908">
    <property type="component" value="Segment"/>
</dbReference>
<dbReference type="Proteomes" id="UP000172909">
    <property type="component" value="Segment"/>
</dbReference>
<dbReference type="InterPro" id="IPR009280">
    <property type="entry name" value="Orthopox_F14"/>
</dbReference>
<dbReference type="Pfam" id="PF06076">
    <property type="entry name" value="Orthopox_F14"/>
    <property type="match status" value="1"/>
</dbReference>
<name>PG058_VACCA</name>
<protein>
    <recommendedName>
        <fullName>Protein OPG058</fullName>
    </recommendedName>
    <alternativeName>
        <fullName>Protein F14</fullName>
    </alternativeName>
</protein>
<accession>P68708</accession>
<accession>O57180</accession>
<accession>Q80HX5</accession>
<reference key="1">
    <citation type="journal article" date="1998" name="Virology">
        <title>The complete genomic sequence of the modified vaccinia Ankara strain: comparison with other orthopoxviruses.</title>
        <authorList>
            <person name="Antoine G."/>
            <person name="Scheiflinger F."/>
            <person name="Dorner F."/>
            <person name="Falkner F.G."/>
        </authorList>
    </citation>
    <scope>NUCLEOTIDE SEQUENCE [LARGE SCALE GENOMIC DNA]</scope>
</reference>
<reference key="2">
    <citation type="submission" date="2004-04" db="EMBL/GenBank/DDBJ databases">
        <authorList>
            <person name="Esposito J.J."/>
            <person name="Frace M."/>
            <person name="Sammons S.A."/>
            <person name="Olsen-Rasmussen M.S."/>
            <person name="Osborne J."/>
            <person name="Khristova M."/>
            <person name="Wohlhueter R.M."/>
        </authorList>
    </citation>
    <scope>NUCLEOTIDE SEQUENCE [LARGE SCALE GENOMIC DNA]</scope>
    <source>
        <strain>Isolate Acambis 3000</strain>
    </source>
</reference>
<evidence type="ECO:0000250" key="1">
    <source>
        <dbReference type="UniProtKB" id="P68707"/>
    </source>
</evidence>
<evidence type="ECO:0000305" key="2"/>
<keyword id="KW-0244">Early protein</keyword>
<sequence>MKHRLYSEGLSISNDLNSIIGQQSTMDTDIEIDEDDIMELLNILTELGCDVDFDENFSDIADDILESLIEQDV</sequence>
<gene>
    <name type="primary">OPG058</name>
    <name type="ordered locus">MVA044L</name>
    <name type="ordered locus">ACAM3000_MVA_044</name>
</gene>
<comment type="induction">
    <text evidence="1">Expressed in the early phase of the viral replicative cycle.</text>
</comment>
<comment type="similarity">
    <text evidence="2">Belongs to the orthopoxvirus OPG058 family.</text>
</comment>
<feature type="chain" id="PRO_0000099506" description="Protein OPG058">
    <location>
        <begin position="1"/>
        <end position="73"/>
    </location>
</feature>
<proteinExistence type="inferred from homology"/>
<organismHost>
    <name type="scientific">Homo sapiens</name>
    <name type="common">Human</name>
    <dbReference type="NCBI Taxonomy" id="9606"/>
</organismHost>
<organism>
    <name type="scientific">Vaccinia virus (strain Ankara)</name>
    <name type="common">VACV</name>
    <dbReference type="NCBI Taxonomy" id="126794"/>
    <lineage>
        <taxon>Viruses</taxon>
        <taxon>Varidnaviria</taxon>
        <taxon>Bamfordvirae</taxon>
        <taxon>Nucleocytoviricota</taxon>
        <taxon>Pokkesviricetes</taxon>
        <taxon>Chitovirales</taxon>
        <taxon>Poxviridae</taxon>
        <taxon>Chordopoxvirinae</taxon>
        <taxon>Orthopoxvirus</taxon>
        <taxon>Vaccinia virus</taxon>
    </lineage>
</organism>